<feature type="chain" id="PRO_0000233217" description="Cytochrome b559 subunit alpha">
    <location>
        <begin position="1"/>
        <end position="82"/>
    </location>
</feature>
<feature type="transmembrane region" description="Helical" evidence="1">
    <location>
        <begin position="22"/>
        <end position="36"/>
    </location>
</feature>
<feature type="binding site" description="axial binding residue" evidence="1">
    <location>
        <position position="24"/>
    </location>
    <ligand>
        <name>heme</name>
        <dbReference type="ChEBI" id="CHEBI:30413"/>
        <note>ligand shared with beta subunit</note>
    </ligand>
    <ligandPart>
        <name>Fe</name>
        <dbReference type="ChEBI" id="CHEBI:18248"/>
    </ligandPart>
</feature>
<dbReference type="EMBL" id="AE017126">
    <property type="protein sequence ID" value="AAP99374.1"/>
    <property type="molecule type" value="Genomic_DNA"/>
</dbReference>
<dbReference type="RefSeq" id="NP_874722.1">
    <property type="nucleotide sequence ID" value="NC_005042.1"/>
</dbReference>
<dbReference type="RefSeq" id="WP_011124483.1">
    <property type="nucleotide sequence ID" value="NC_005042.1"/>
</dbReference>
<dbReference type="SMR" id="Q7VDP0"/>
<dbReference type="STRING" id="167539.Pro_0328"/>
<dbReference type="EnsemblBacteria" id="AAP99374">
    <property type="protein sequence ID" value="AAP99374"/>
    <property type="gene ID" value="Pro_0328"/>
</dbReference>
<dbReference type="KEGG" id="pma:Pro_0328"/>
<dbReference type="PATRIC" id="fig|167539.5.peg.337"/>
<dbReference type="eggNOG" id="ENOG50306MP">
    <property type="taxonomic scope" value="Bacteria"/>
</dbReference>
<dbReference type="HOGENOM" id="CLU_194095_0_0_3"/>
<dbReference type="OrthoDB" id="514620at2"/>
<dbReference type="Proteomes" id="UP000001420">
    <property type="component" value="Chromosome"/>
</dbReference>
<dbReference type="GO" id="GO:0009523">
    <property type="term" value="C:photosystem II"/>
    <property type="evidence" value="ECO:0007669"/>
    <property type="project" value="UniProtKB-KW"/>
</dbReference>
<dbReference type="GO" id="GO:0031676">
    <property type="term" value="C:plasma membrane-derived thylakoid membrane"/>
    <property type="evidence" value="ECO:0007669"/>
    <property type="project" value="UniProtKB-SubCell"/>
</dbReference>
<dbReference type="GO" id="GO:0009055">
    <property type="term" value="F:electron transfer activity"/>
    <property type="evidence" value="ECO:0007669"/>
    <property type="project" value="UniProtKB-UniRule"/>
</dbReference>
<dbReference type="GO" id="GO:0020037">
    <property type="term" value="F:heme binding"/>
    <property type="evidence" value="ECO:0007669"/>
    <property type="project" value="InterPro"/>
</dbReference>
<dbReference type="GO" id="GO:0005506">
    <property type="term" value="F:iron ion binding"/>
    <property type="evidence" value="ECO:0007669"/>
    <property type="project" value="UniProtKB-UniRule"/>
</dbReference>
<dbReference type="GO" id="GO:0009767">
    <property type="term" value="P:photosynthetic electron transport chain"/>
    <property type="evidence" value="ECO:0007669"/>
    <property type="project" value="InterPro"/>
</dbReference>
<dbReference type="Gene3D" id="1.20.5.860">
    <property type="entry name" value="Photosystem II cytochrome b559, alpha subunit"/>
    <property type="match status" value="1"/>
</dbReference>
<dbReference type="HAMAP" id="MF_00642">
    <property type="entry name" value="PSII_PsbE"/>
    <property type="match status" value="1"/>
</dbReference>
<dbReference type="InterPro" id="IPR006217">
    <property type="entry name" value="PSII_cyt_b559_asu"/>
</dbReference>
<dbReference type="InterPro" id="IPR037025">
    <property type="entry name" value="PSII_cyt_b559_asu_sf"/>
</dbReference>
<dbReference type="InterPro" id="IPR013081">
    <property type="entry name" value="PSII_cyt_b559_N"/>
</dbReference>
<dbReference type="InterPro" id="IPR013082">
    <property type="entry name" value="PSII_cytb559_asu_lum"/>
</dbReference>
<dbReference type="NCBIfam" id="TIGR01332">
    <property type="entry name" value="cyt_b559_alpha"/>
    <property type="match status" value="1"/>
</dbReference>
<dbReference type="PANTHER" id="PTHR33391">
    <property type="entry name" value="CYTOCHROME B559 SUBUNIT BETA-RELATED"/>
    <property type="match status" value="1"/>
</dbReference>
<dbReference type="PANTHER" id="PTHR33391:SF9">
    <property type="entry name" value="CYTOCHROME B559 SUBUNIT BETA-RELATED"/>
    <property type="match status" value="1"/>
</dbReference>
<dbReference type="Pfam" id="PF00283">
    <property type="entry name" value="Cytochrom_B559"/>
    <property type="match status" value="1"/>
</dbReference>
<dbReference type="Pfam" id="PF00284">
    <property type="entry name" value="Cytochrom_B559a"/>
    <property type="match status" value="1"/>
</dbReference>
<dbReference type="PIRSF" id="PIRSF000036">
    <property type="entry name" value="PsbE"/>
    <property type="match status" value="1"/>
</dbReference>
<dbReference type="SUPFAM" id="SSF161045">
    <property type="entry name" value="Cytochrome b559 subunits"/>
    <property type="match status" value="1"/>
</dbReference>
<keyword id="KW-0249">Electron transport</keyword>
<keyword id="KW-0349">Heme</keyword>
<keyword id="KW-0408">Iron</keyword>
<keyword id="KW-0472">Membrane</keyword>
<keyword id="KW-0479">Metal-binding</keyword>
<keyword id="KW-0602">Photosynthesis</keyword>
<keyword id="KW-0604">Photosystem II</keyword>
<keyword id="KW-1185">Reference proteome</keyword>
<keyword id="KW-0793">Thylakoid</keyword>
<keyword id="KW-0812">Transmembrane</keyword>
<keyword id="KW-1133">Transmembrane helix</keyword>
<keyword id="KW-0813">Transport</keyword>
<protein>
    <recommendedName>
        <fullName evidence="1">Cytochrome b559 subunit alpha</fullName>
    </recommendedName>
    <alternativeName>
        <fullName evidence="1">PSII reaction center subunit V</fullName>
    </alternativeName>
</protein>
<reference key="1">
    <citation type="journal article" date="2003" name="Proc. Natl. Acad. Sci. U.S.A.">
        <title>Genome sequence of the cyanobacterium Prochlorococcus marinus SS120, a nearly minimal oxyphototrophic genome.</title>
        <authorList>
            <person name="Dufresne A."/>
            <person name="Salanoubat M."/>
            <person name="Partensky F."/>
            <person name="Artiguenave F."/>
            <person name="Axmann I.M."/>
            <person name="Barbe V."/>
            <person name="Duprat S."/>
            <person name="Galperin M.Y."/>
            <person name="Koonin E.V."/>
            <person name="Le Gall F."/>
            <person name="Makarova K.S."/>
            <person name="Ostrowski M."/>
            <person name="Oztas S."/>
            <person name="Robert C."/>
            <person name="Rogozin I.B."/>
            <person name="Scanlan D.J."/>
            <person name="Tandeau de Marsac N."/>
            <person name="Weissenbach J."/>
            <person name="Wincker P."/>
            <person name="Wolf Y.I."/>
            <person name="Hess W.R."/>
        </authorList>
    </citation>
    <scope>NUCLEOTIDE SEQUENCE [LARGE SCALE GENOMIC DNA]</scope>
    <source>
        <strain>SARG / CCMP1375 / SS120</strain>
    </source>
</reference>
<organism>
    <name type="scientific">Prochlorococcus marinus (strain SARG / CCMP1375 / SS120)</name>
    <dbReference type="NCBI Taxonomy" id="167539"/>
    <lineage>
        <taxon>Bacteria</taxon>
        <taxon>Bacillati</taxon>
        <taxon>Cyanobacteriota</taxon>
        <taxon>Cyanophyceae</taxon>
        <taxon>Synechococcales</taxon>
        <taxon>Prochlorococcaceae</taxon>
        <taxon>Prochlorococcus</taxon>
    </lineage>
</organism>
<accession>Q7VDP0</accession>
<name>PSBE_PROMA</name>
<sequence>MAAGSTGERPFFEIITSVRYWIIHAVTLPAIFIAGFLFVSTGLAYDAFGTPRPDTYFQASETKAPVVSQRFESKAQLDLRLK</sequence>
<evidence type="ECO:0000255" key="1">
    <source>
        <dbReference type="HAMAP-Rule" id="MF_00642"/>
    </source>
</evidence>
<evidence type="ECO:0000305" key="2"/>
<comment type="function">
    <text evidence="1">This b-type cytochrome is tightly associated with the reaction center of photosystem II (PSII). PSII is a light-driven water:plastoquinone oxidoreductase that uses light energy to abstract electrons from H(2)O, generating O(2) and a proton gradient subsequently used for ATP formation. It consists of a core antenna complex that captures photons, and an electron transfer chain that converts photonic excitation into a charge separation.</text>
</comment>
<comment type="cofactor">
    <cofactor evidence="1">
        <name>heme b</name>
        <dbReference type="ChEBI" id="CHEBI:60344"/>
    </cofactor>
    <text evidence="1">With its partner (PsbF) binds heme. PSII binds additional chlorophylls, carotenoids and specific lipids.</text>
</comment>
<comment type="subunit">
    <text evidence="2">Heterodimer of an alpha subunit and a beta subunit. PSII is composed of 1 copy each of membrane proteins PsbA, PsbB, PsbC, PsbD, PsbE, PsbF, PsbH, PsbI, PsbJ, PsbK, PsbL, PsbM, PsbT, PsbX, PsbY, Psb30/Ycf12, peripheral proteins PsbO, CyanoQ (PsbQ), PsbU, PsbV and a large number of cofactors. It forms dimeric complexes.</text>
</comment>
<comment type="subcellular location">
    <subcellularLocation>
        <location evidence="1">Cellular thylakoid membrane</location>
        <topology evidence="1">Single-pass membrane protein</topology>
    </subcellularLocation>
</comment>
<comment type="similarity">
    <text evidence="1">Belongs to the PsbE/PsbF family.</text>
</comment>
<gene>
    <name evidence="1" type="primary">psbE</name>
    <name type="ordered locus">Pro_0328</name>
</gene>
<proteinExistence type="inferred from homology"/>